<sequence length="316" mass="35303">MASLKSLFLLFLFFFTAQSRLTTNFYSKTCPRFLDIIRDTITNKQITNPTTAAAVIRLFFHDCFPNGCDASVLISSTAFNTAERDSSINLSLPGDGFDVIVRAKTALELACPNTVSCSDIISVATRDLLITVGGPYYDVFLGRRDSRTSKSSLLTDLLPLPSTPISKIIQQFESKGFTVQEMVALSGAHSIGFSHCKEFVGRVGRNNTGYNPRFAVALKKACANYPKDPTISVFNDIMTPNKFDNMYYQNLKKGLGLLESDHGLYSDPRTRYFVDLYAKNQDLFFKDFAKAMQKLSLFGIQTGRRGEIRRRCDAIN</sequence>
<proteinExistence type="evidence at transcript level"/>
<accession>Q9LHA7</accession>
<accession>Q94CB9</accession>
<evidence type="ECO:0000255" key="1"/>
<evidence type="ECO:0000255" key="2">
    <source>
        <dbReference type="PROSITE-ProRule" id="PRU00297"/>
    </source>
</evidence>
<evidence type="ECO:0000305" key="3"/>
<protein>
    <recommendedName>
        <fullName>Peroxidase 31</fullName>
        <shortName>Atperox P31</shortName>
        <ecNumber>1.11.1.7</ecNumber>
    </recommendedName>
    <alternativeName>
        <fullName>ATP41</fullName>
    </alternativeName>
</protein>
<gene>
    <name type="primary">PER31</name>
    <name type="synonym">P31</name>
    <name type="ordered locus">At3g28200</name>
    <name type="ORF">T19D11.1</name>
    <name type="ORF">T19D11.4</name>
</gene>
<reference key="1">
    <citation type="journal article" date="2000" name="DNA Res.">
        <title>Structural analysis of Arabidopsis thaliana chromosome 3. II. Sequence features of the 4,251,695 bp regions covered by 90 P1, TAC and BAC clones.</title>
        <authorList>
            <person name="Kaneko T."/>
            <person name="Katoh T."/>
            <person name="Sato S."/>
            <person name="Nakamura Y."/>
            <person name="Asamizu E."/>
            <person name="Tabata S."/>
        </authorList>
    </citation>
    <scope>NUCLEOTIDE SEQUENCE [LARGE SCALE GENOMIC DNA]</scope>
    <source>
        <strain>cv. Columbia</strain>
    </source>
</reference>
<reference key="2">
    <citation type="journal article" date="2017" name="Plant J.">
        <title>Araport11: a complete reannotation of the Arabidopsis thaliana reference genome.</title>
        <authorList>
            <person name="Cheng C.Y."/>
            <person name="Krishnakumar V."/>
            <person name="Chan A.P."/>
            <person name="Thibaud-Nissen F."/>
            <person name="Schobel S."/>
            <person name="Town C.D."/>
        </authorList>
    </citation>
    <scope>GENOME REANNOTATION</scope>
    <source>
        <strain>cv. Columbia</strain>
    </source>
</reference>
<reference key="3">
    <citation type="journal article" date="2003" name="Science">
        <title>Empirical analysis of transcriptional activity in the Arabidopsis genome.</title>
        <authorList>
            <person name="Yamada K."/>
            <person name="Lim J."/>
            <person name="Dale J.M."/>
            <person name="Chen H."/>
            <person name="Shinn P."/>
            <person name="Palm C.J."/>
            <person name="Southwick A.M."/>
            <person name="Wu H.C."/>
            <person name="Kim C.J."/>
            <person name="Nguyen M."/>
            <person name="Pham P.K."/>
            <person name="Cheuk R.F."/>
            <person name="Karlin-Newmann G."/>
            <person name="Liu S.X."/>
            <person name="Lam B."/>
            <person name="Sakano H."/>
            <person name="Wu T."/>
            <person name="Yu G."/>
            <person name="Miranda M."/>
            <person name="Quach H.L."/>
            <person name="Tripp M."/>
            <person name="Chang C.H."/>
            <person name="Lee J.M."/>
            <person name="Toriumi M.J."/>
            <person name="Chan M.M."/>
            <person name="Tang C.C."/>
            <person name="Onodera C.S."/>
            <person name="Deng J.M."/>
            <person name="Akiyama K."/>
            <person name="Ansari Y."/>
            <person name="Arakawa T."/>
            <person name="Banh J."/>
            <person name="Banno F."/>
            <person name="Bowser L."/>
            <person name="Brooks S.Y."/>
            <person name="Carninci P."/>
            <person name="Chao Q."/>
            <person name="Choy N."/>
            <person name="Enju A."/>
            <person name="Goldsmith A.D."/>
            <person name="Gurjal M."/>
            <person name="Hansen N.F."/>
            <person name="Hayashizaki Y."/>
            <person name="Johnson-Hopson C."/>
            <person name="Hsuan V.W."/>
            <person name="Iida K."/>
            <person name="Karnes M."/>
            <person name="Khan S."/>
            <person name="Koesema E."/>
            <person name="Ishida J."/>
            <person name="Jiang P.X."/>
            <person name="Jones T."/>
            <person name="Kawai J."/>
            <person name="Kamiya A."/>
            <person name="Meyers C."/>
            <person name="Nakajima M."/>
            <person name="Narusaka M."/>
            <person name="Seki M."/>
            <person name="Sakurai T."/>
            <person name="Satou M."/>
            <person name="Tamse R."/>
            <person name="Vaysberg M."/>
            <person name="Wallender E.K."/>
            <person name="Wong C."/>
            <person name="Yamamura Y."/>
            <person name="Yuan S."/>
            <person name="Shinozaki K."/>
            <person name="Davis R.W."/>
            <person name="Theologis A."/>
            <person name="Ecker J.R."/>
        </authorList>
    </citation>
    <scope>NUCLEOTIDE SEQUENCE [LARGE SCALE MRNA]</scope>
    <source>
        <strain>cv. Columbia</strain>
    </source>
</reference>
<reference key="4">
    <citation type="journal article" date="2002" name="Gene">
        <title>Analysis and expression of the class III peroxidase large gene family in Arabidopsis thaliana.</title>
        <authorList>
            <person name="Tognolli M."/>
            <person name="Penel C."/>
            <person name="Greppin H."/>
            <person name="Simon P."/>
        </authorList>
    </citation>
    <scope>GENE FAMILY ORGANIZATION</scope>
    <scope>NOMENCLATURE</scope>
    <source>
        <strain>cv. Columbia</strain>
    </source>
</reference>
<feature type="signal peptide" evidence="1">
    <location>
        <begin position="1"/>
        <end position="19"/>
    </location>
</feature>
<feature type="chain" id="PRO_0000023697" description="Peroxidase 31">
    <location>
        <begin position="20"/>
        <end position="316"/>
    </location>
</feature>
<feature type="active site" description="Proton acceptor">
    <location>
        <position position="61"/>
    </location>
</feature>
<feature type="binding site" evidence="2">
    <location>
        <position position="62"/>
    </location>
    <ligand>
        <name>Ca(2+)</name>
        <dbReference type="ChEBI" id="CHEBI:29108"/>
        <label>1</label>
    </ligand>
</feature>
<feature type="binding site" evidence="2">
    <location>
        <position position="67"/>
    </location>
    <ligand>
        <name>Ca(2+)</name>
        <dbReference type="ChEBI" id="CHEBI:29108"/>
        <label>1</label>
    </ligand>
</feature>
<feature type="binding site" evidence="2">
    <location>
        <position position="69"/>
    </location>
    <ligand>
        <name>Ca(2+)</name>
        <dbReference type="ChEBI" id="CHEBI:29108"/>
        <label>1</label>
    </ligand>
</feature>
<feature type="binding site" evidence="2">
    <location>
        <position position="71"/>
    </location>
    <ligand>
        <name>Ca(2+)</name>
        <dbReference type="ChEBI" id="CHEBI:29108"/>
        <label>1</label>
    </ligand>
</feature>
<feature type="binding site" evidence="2">
    <location>
        <position position="159"/>
    </location>
    <ligand>
        <name>substrate</name>
    </ligand>
</feature>
<feature type="binding site" description="axial binding residue" evidence="2">
    <location>
        <position position="189"/>
    </location>
    <ligand>
        <name>heme b</name>
        <dbReference type="ChEBI" id="CHEBI:60344"/>
    </ligand>
    <ligandPart>
        <name>Fe</name>
        <dbReference type="ChEBI" id="CHEBI:18248"/>
    </ligandPart>
</feature>
<feature type="binding site" evidence="2">
    <location>
        <position position="190"/>
    </location>
    <ligand>
        <name>Ca(2+)</name>
        <dbReference type="ChEBI" id="CHEBI:29108"/>
        <label>2</label>
    </ligand>
</feature>
<feature type="binding site" evidence="2">
    <location>
        <position position="236"/>
    </location>
    <ligand>
        <name>Ca(2+)</name>
        <dbReference type="ChEBI" id="CHEBI:29108"/>
        <label>2</label>
    </ligand>
</feature>
<feature type="binding site" evidence="2">
    <location>
        <position position="239"/>
    </location>
    <ligand>
        <name>Ca(2+)</name>
        <dbReference type="ChEBI" id="CHEBI:29108"/>
        <label>2</label>
    </ligand>
</feature>
<feature type="binding site" evidence="2">
    <location>
        <position position="244"/>
    </location>
    <ligand>
        <name>Ca(2+)</name>
        <dbReference type="ChEBI" id="CHEBI:29108"/>
        <label>2</label>
    </ligand>
</feature>
<feature type="site" description="Transition state stabilizer" evidence="2">
    <location>
        <position position="57"/>
    </location>
</feature>
<feature type="glycosylation site" description="N-linked (GlcNAc...) asparagine" evidence="1">
    <location>
        <position position="206"/>
    </location>
</feature>
<feature type="disulfide bond" evidence="2">
    <location>
        <begin position="30"/>
        <end position="111"/>
    </location>
</feature>
<feature type="disulfide bond" evidence="2">
    <location>
        <begin position="63"/>
        <end position="68"/>
    </location>
</feature>
<feature type="disulfide bond" evidence="2">
    <location>
        <begin position="117"/>
        <end position="312"/>
    </location>
</feature>
<feature type="disulfide bond" evidence="2">
    <location>
        <begin position="196"/>
        <end position="222"/>
    </location>
</feature>
<feature type="sequence conflict" description="In Ref. 3; AAK59478." evidence="3" ref="3">
    <original>R</original>
    <variation>H</variation>
    <location>
        <position position="143"/>
    </location>
</feature>
<name>PER31_ARATH</name>
<organism>
    <name type="scientific">Arabidopsis thaliana</name>
    <name type="common">Mouse-ear cress</name>
    <dbReference type="NCBI Taxonomy" id="3702"/>
    <lineage>
        <taxon>Eukaryota</taxon>
        <taxon>Viridiplantae</taxon>
        <taxon>Streptophyta</taxon>
        <taxon>Embryophyta</taxon>
        <taxon>Tracheophyta</taxon>
        <taxon>Spermatophyta</taxon>
        <taxon>Magnoliopsida</taxon>
        <taxon>eudicotyledons</taxon>
        <taxon>Gunneridae</taxon>
        <taxon>Pentapetalae</taxon>
        <taxon>rosids</taxon>
        <taxon>malvids</taxon>
        <taxon>Brassicales</taxon>
        <taxon>Brassicaceae</taxon>
        <taxon>Camelineae</taxon>
        <taxon>Arabidopsis</taxon>
    </lineage>
</organism>
<dbReference type="EC" id="1.11.1.7"/>
<dbReference type="EMBL" id="AP002056">
    <property type="protein sequence ID" value="BAB02637.1"/>
    <property type="molecule type" value="Genomic_DNA"/>
</dbReference>
<dbReference type="EMBL" id="CP002686">
    <property type="protein sequence ID" value="AEE77415.1"/>
    <property type="molecule type" value="Genomic_DNA"/>
</dbReference>
<dbReference type="EMBL" id="AY034973">
    <property type="protein sequence ID" value="AAK59478.1"/>
    <property type="molecule type" value="mRNA"/>
</dbReference>
<dbReference type="EMBL" id="AY150382">
    <property type="protein sequence ID" value="AAN12927.1"/>
    <property type="molecule type" value="mRNA"/>
</dbReference>
<dbReference type="RefSeq" id="NP_189460.1">
    <property type="nucleotide sequence ID" value="NM_113739.3"/>
</dbReference>
<dbReference type="SMR" id="Q9LHA7"/>
<dbReference type="BioGRID" id="7775">
    <property type="interactions" value="3"/>
</dbReference>
<dbReference type="FunCoup" id="Q9LHA7">
    <property type="interactions" value="134"/>
</dbReference>
<dbReference type="IntAct" id="Q9LHA7">
    <property type="interactions" value="1"/>
</dbReference>
<dbReference type="STRING" id="3702.Q9LHA7"/>
<dbReference type="PeroxiBase" id="197">
    <property type="entry name" value="AtPrx31"/>
</dbReference>
<dbReference type="GlyCosmos" id="Q9LHA7">
    <property type="glycosylation" value="1 site, No reported glycans"/>
</dbReference>
<dbReference type="GlyGen" id="Q9LHA7">
    <property type="glycosylation" value="1 site"/>
</dbReference>
<dbReference type="iPTMnet" id="Q9LHA7"/>
<dbReference type="PaxDb" id="3702-AT3G28200.1"/>
<dbReference type="ProteomicsDB" id="236767"/>
<dbReference type="EnsemblPlants" id="AT3G28200.1">
    <property type="protein sequence ID" value="AT3G28200.1"/>
    <property type="gene ID" value="AT3G28200"/>
</dbReference>
<dbReference type="GeneID" id="822446"/>
<dbReference type="Gramene" id="AT3G28200.1">
    <property type="protein sequence ID" value="AT3G28200.1"/>
    <property type="gene ID" value="AT3G28200"/>
</dbReference>
<dbReference type="KEGG" id="ath:AT3G28200"/>
<dbReference type="Araport" id="AT3G28200"/>
<dbReference type="TAIR" id="AT3G28200"/>
<dbReference type="eggNOG" id="ENOG502QR74">
    <property type="taxonomic scope" value="Eukaryota"/>
</dbReference>
<dbReference type="HOGENOM" id="CLU_010543_0_3_1"/>
<dbReference type="InParanoid" id="Q9LHA7"/>
<dbReference type="OMA" id="DCLLNGC"/>
<dbReference type="PhylomeDB" id="Q9LHA7"/>
<dbReference type="BioCyc" id="ARA:AT3G28200-MONOMER"/>
<dbReference type="PRO" id="PR:Q9LHA7"/>
<dbReference type="Proteomes" id="UP000006548">
    <property type="component" value="Chromosome 3"/>
</dbReference>
<dbReference type="ExpressionAtlas" id="Q9LHA7">
    <property type="expression patterns" value="baseline and differential"/>
</dbReference>
<dbReference type="GO" id="GO:0005576">
    <property type="term" value="C:extracellular region"/>
    <property type="evidence" value="ECO:0007669"/>
    <property type="project" value="UniProtKB-SubCell"/>
</dbReference>
<dbReference type="GO" id="GO:0009505">
    <property type="term" value="C:plant-type cell wall"/>
    <property type="evidence" value="ECO:0007005"/>
    <property type="project" value="TAIR"/>
</dbReference>
<dbReference type="GO" id="GO:0020037">
    <property type="term" value="F:heme binding"/>
    <property type="evidence" value="ECO:0007669"/>
    <property type="project" value="InterPro"/>
</dbReference>
<dbReference type="GO" id="GO:0140825">
    <property type="term" value="F:lactoperoxidase activity"/>
    <property type="evidence" value="ECO:0007669"/>
    <property type="project" value="UniProtKB-EC"/>
</dbReference>
<dbReference type="GO" id="GO:0046872">
    <property type="term" value="F:metal ion binding"/>
    <property type="evidence" value="ECO:0007669"/>
    <property type="project" value="UniProtKB-KW"/>
</dbReference>
<dbReference type="GO" id="GO:0042744">
    <property type="term" value="P:hydrogen peroxide catabolic process"/>
    <property type="evidence" value="ECO:0007669"/>
    <property type="project" value="UniProtKB-KW"/>
</dbReference>
<dbReference type="GO" id="GO:0006979">
    <property type="term" value="P:response to oxidative stress"/>
    <property type="evidence" value="ECO:0007669"/>
    <property type="project" value="InterPro"/>
</dbReference>
<dbReference type="CDD" id="cd00693">
    <property type="entry name" value="secretory_peroxidase"/>
    <property type="match status" value="1"/>
</dbReference>
<dbReference type="FunFam" id="1.10.420.10:FF:000007">
    <property type="entry name" value="Peroxidase"/>
    <property type="match status" value="1"/>
</dbReference>
<dbReference type="FunFam" id="1.10.520.10:FF:000008">
    <property type="entry name" value="Peroxidase"/>
    <property type="match status" value="1"/>
</dbReference>
<dbReference type="Gene3D" id="1.10.520.10">
    <property type="match status" value="1"/>
</dbReference>
<dbReference type="Gene3D" id="1.10.420.10">
    <property type="entry name" value="Peroxidase, domain 2"/>
    <property type="match status" value="1"/>
</dbReference>
<dbReference type="InterPro" id="IPR002016">
    <property type="entry name" value="Haem_peroxidase"/>
</dbReference>
<dbReference type="InterPro" id="IPR010255">
    <property type="entry name" value="Haem_peroxidase_sf"/>
</dbReference>
<dbReference type="InterPro" id="IPR000823">
    <property type="entry name" value="Peroxidase_pln"/>
</dbReference>
<dbReference type="InterPro" id="IPR019794">
    <property type="entry name" value="Peroxidases_AS"/>
</dbReference>
<dbReference type="InterPro" id="IPR019793">
    <property type="entry name" value="Peroxidases_heam-ligand_BS"/>
</dbReference>
<dbReference type="InterPro" id="IPR033905">
    <property type="entry name" value="Secretory_peroxidase"/>
</dbReference>
<dbReference type="PANTHER" id="PTHR31517">
    <property type="match status" value="1"/>
</dbReference>
<dbReference type="PANTHER" id="PTHR31517:SF11">
    <property type="entry name" value="PEROXIDASE 31"/>
    <property type="match status" value="1"/>
</dbReference>
<dbReference type="Pfam" id="PF00141">
    <property type="entry name" value="peroxidase"/>
    <property type="match status" value="1"/>
</dbReference>
<dbReference type="PRINTS" id="PR00458">
    <property type="entry name" value="PEROXIDASE"/>
</dbReference>
<dbReference type="PRINTS" id="PR00461">
    <property type="entry name" value="PLPEROXIDASE"/>
</dbReference>
<dbReference type="SUPFAM" id="SSF48113">
    <property type="entry name" value="Heme-dependent peroxidases"/>
    <property type="match status" value="1"/>
</dbReference>
<dbReference type="PROSITE" id="PS00435">
    <property type="entry name" value="PEROXIDASE_1"/>
    <property type="match status" value="1"/>
</dbReference>
<dbReference type="PROSITE" id="PS00436">
    <property type="entry name" value="PEROXIDASE_2"/>
    <property type="match status" value="1"/>
</dbReference>
<dbReference type="PROSITE" id="PS50873">
    <property type="entry name" value="PEROXIDASE_4"/>
    <property type="match status" value="1"/>
</dbReference>
<keyword id="KW-0106">Calcium</keyword>
<keyword id="KW-1015">Disulfide bond</keyword>
<keyword id="KW-0325">Glycoprotein</keyword>
<keyword id="KW-0349">Heme</keyword>
<keyword id="KW-0376">Hydrogen peroxide</keyword>
<keyword id="KW-0408">Iron</keyword>
<keyword id="KW-0479">Metal-binding</keyword>
<keyword id="KW-0560">Oxidoreductase</keyword>
<keyword id="KW-0575">Peroxidase</keyword>
<keyword id="KW-1185">Reference proteome</keyword>
<keyword id="KW-0964">Secreted</keyword>
<keyword id="KW-0732">Signal</keyword>
<comment type="function">
    <text>Removal of H(2)O(2), oxidation of toxic reductants, biosynthesis and degradation of lignin, suberization, auxin catabolism, response to environmental stresses such as wounding, pathogen attack and oxidative stress. These functions might be dependent on each isozyme/isoform in each plant tissue.</text>
</comment>
<comment type="catalytic activity">
    <reaction>
        <text>2 a phenolic donor + H2O2 = 2 a phenolic radical donor + 2 H2O</text>
        <dbReference type="Rhea" id="RHEA:56136"/>
        <dbReference type="ChEBI" id="CHEBI:15377"/>
        <dbReference type="ChEBI" id="CHEBI:16240"/>
        <dbReference type="ChEBI" id="CHEBI:139520"/>
        <dbReference type="ChEBI" id="CHEBI:139521"/>
        <dbReference type="EC" id="1.11.1.7"/>
    </reaction>
</comment>
<comment type="cofactor">
    <cofactor evidence="2">
        <name>heme b</name>
        <dbReference type="ChEBI" id="CHEBI:60344"/>
    </cofactor>
    <text evidence="2">Binds 1 heme b (iron(II)-protoporphyrin IX) group per subunit.</text>
</comment>
<comment type="cofactor">
    <cofactor evidence="2">
        <name>Ca(2+)</name>
        <dbReference type="ChEBI" id="CHEBI:29108"/>
    </cofactor>
    <text evidence="2">Binds 2 calcium ions per subunit.</text>
</comment>
<comment type="subcellular location">
    <subcellularLocation>
        <location evidence="2">Secreted</location>
    </subcellularLocation>
</comment>
<comment type="miscellaneous">
    <text>There are 73 peroxidase genes in A.thaliana.</text>
</comment>
<comment type="similarity">
    <text evidence="2">Belongs to the peroxidase family. Classical plant (class III) peroxidase subfamily.</text>
</comment>